<accession>B7JLX3</accession>
<feature type="chain" id="PRO_1000119856" description="ATP-dependent dethiobiotin synthetase BioD">
    <location>
        <begin position="1"/>
        <end position="242"/>
    </location>
</feature>
<feature type="active site" evidence="1">
    <location>
        <position position="37"/>
    </location>
</feature>
<feature type="binding site" evidence="1">
    <location>
        <begin position="12"/>
        <end position="17"/>
    </location>
    <ligand>
        <name>ATP</name>
        <dbReference type="ChEBI" id="CHEBI:30616"/>
    </ligand>
</feature>
<feature type="binding site" evidence="1">
    <location>
        <position position="16"/>
    </location>
    <ligand>
        <name>Mg(2+)</name>
        <dbReference type="ChEBI" id="CHEBI:18420"/>
    </ligand>
</feature>
<feature type="binding site" evidence="1">
    <location>
        <position position="41"/>
    </location>
    <ligand>
        <name>substrate</name>
    </ligand>
</feature>
<feature type="binding site" evidence="1">
    <location>
        <position position="51"/>
    </location>
    <ligand>
        <name>ATP</name>
        <dbReference type="ChEBI" id="CHEBI:30616"/>
    </ligand>
</feature>
<feature type="binding site" evidence="1">
    <location>
        <position position="51"/>
    </location>
    <ligand>
        <name>Mg(2+)</name>
        <dbReference type="ChEBI" id="CHEBI:18420"/>
    </ligand>
</feature>
<feature type="binding site" evidence="1">
    <location>
        <begin position="112"/>
        <end position="115"/>
    </location>
    <ligand>
        <name>ATP</name>
        <dbReference type="ChEBI" id="CHEBI:30616"/>
    </ligand>
</feature>
<feature type="binding site" evidence="1">
    <location>
        <position position="112"/>
    </location>
    <ligand>
        <name>Mg(2+)</name>
        <dbReference type="ChEBI" id="CHEBI:18420"/>
    </ligand>
</feature>
<dbReference type="EC" id="6.3.3.3" evidence="1"/>
<dbReference type="EMBL" id="CP001283">
    <property type="protein sequence ID" value="ACK87432.1"/>
    <property type="molecule type" value="Genomic_DNA"/>
</dbReference>
<dbReference type="RefSeq" id="WP_000012484.1">
    <property type="nucleotide sequence ID" value="NC_011773.1"/>
</dbReference>
<dbReference type="SMR" id="B7JLX3"/>
<dbReference type="KEGG" id="bcu:BCAH820_4142"/>
<dbReference type="HOGENOM" id="CLU_072551_3_0_9"/>
<dbReference type="UniPathway" id="UPA00078">
    <property type="reaction ID" value="UER00161"/>
</dbReference>
<dbReference type="Proteomes" id="UP000001363">
    <property type="component" value="Chromosome"/>
</dbReference>
<dbReference type="GO" id="GO:0005829">
    <property type="term" value="C:cytosol"/>
    <property type="evidence" value="ECO:0007669"/>
    <property type="project" value="TreeGrafter"/>
</dbReference>
<dbReference type="GO" id="GO:0005524">
    <property type="term" value="F:ATP binding"/>
    <property type="evidence" value="ECO:0007669"/>
    <property type="project" value="UniProtKB-UniRule"/>
</dbReference>
<dbReference type="GO" id="GO:0004141">
    <property type="term" value="F:dethiobiotin synthase activity"/>
    <property type="evidence" value="ECO:0007669"/>
    <property type="project" value="UniProtKB-UniRule"/>
</dbReference>
<dbReference type="GO" id="GO:0000287">
    <property type="term" value="F:magnesium ion binding"/>
    <property type="evidence" value="ECO:0007669"/>
    <property type="project" value="UniProtKB-UniRule"/>
</dbReference>
<dbReference type="GO" id="GO:0009102">
    <property type="term" value="P:biotin biosynthetic process"/>
    <property type="evidence" value="ECO:0007669"/>
    <property type="project" value="UniProtKB-UniRule"/>
</dbReference>
<dbReference type="CDD" id="cd03109">
    <property type="entry name" value="DTBS"/>
    <property type="match status" value="1"/>
</dbReference>
<dbReference type="FunFam" id="3.40.50.300:FF:001212">
    <property type="entry name" value="ATP-dependent dethiobiotin synthetase BioD"/>
    <property type="match status" value="1"/>
</dbReference>
<dbReference type="Gene3D" id="3.40.50.300">
    <property type="entry name" value="P-loop containing nucleotide triphosphate hydrolases"/>
    <property type="match status" value="1"/>
</dbReference>
<dbReference type="HAMAP" id="MF_00336">
    <property type="entry name" value="BioD"/>
    <property type="match status" value="1"/>
</dbReference>
<dbReference type="InterPro" id="IPR004472">
    <property type="entry name" value="DTB_synth_BioD"/>
</dbReference>
<dbReference type="InterPro" id="IPR027417">
    <property type="entry name" value="P-loop_NTPase"/>
</dbReference>
<dbReference type="NCBIfam" id="TIGR00347">
    <property type="entry name" value="bioD"/>
    <property type="match status" value="1"/>
</dbReference>
<dbReference type="PANTHER" id="PTHR43210:SF2">
    <property type="entry name" value="ATP-DEPENDENT DETHIOBIOTIN SYNTHETASE BIOD 2"/>
    <property type="match status" value="1"/>
</dbReference>
<dbReference type="PANTHER" id="PTHR43210">
    <property type="entry name" value="DETHIOBIOTIN SYNTHETASE"/>
    <property type="match status" value="1"/>
</dbReference>
<dbReference type="Pfam" id="PF13500">
    <property type="entry name" value="AAA_26"/>
    <property type="match status" value="1"/>
</dbReference>
<dbReference type="PIRSF" id="PIRSF006755">
    <property type="entry name" value="DTB_synth"/>
    <property type="match status" value="1"/>
</dbReference>
<dbReference type="SUPFAM" id="SSF52540">
    <property type="entry name" value="P-loop containing nucleoside triphosphate hydrolases"/>
    <property type="match status" value="1"/>
</dbReference>
<name>BIOD_BACC0</name>
<comment type="function">
    <text evidence="1">Catalyzes a mechanistically unusual reaction, the ATP-dependent insertion of CO2 between the N7 and N8 nitrogen atoms of 7,8-diaminopelargonic acid (DAPA, also called 7,8-diammoniononanoate) to form a ureido ring.</text>
</comment>
<comment type="catalytic activity">
    <reaction evidence="1">
        <text>(7R,8S)-7,8-diammoniononanoate + CO2 + ATP = (4R,5S)-dethiobiotin + ADP + phosphate + 3 H(+)</text>
        <dbReference type="Rhea" id="RHEA:15805"/>
        <dbReference type="ChEBI" id="CHEBI:15378"/>
        <dbReference type="ChEBI" id="CHEBI:16526"/>
        <dbReference type="ChEBI" id="CHEBI:30616"/>
        <dbReference type="ChEBI" id="CHEBI:43474"/>
        <dbReference type="ChEBI" id="CHEBI:149469"/>
        <dbReference type="ChEBI" id="CHEBI:149473"/>
        <dbReference type="ChEBI" id="CHEBI:456216"/>
        <dbReference type="EC" id="6.3.3.3"/>
    </reaction>
</comment>
<comment type="cofactor">
    <cofactor evidence="1">
        <name>Mg(2+)</name>
        <dbReference type="ChEBI" id="CHEBI:18420"/>
    </cofactor>
</comment>
<comment type="pathway">
    <text evidence="1">Cofactor biosynthesis; biotin biosynthesis; biotin from 7,8-diaminononanoate: step 1/2.</text>
</comment>
<comment type="subunit">
    <text evidence="1">Homodimer.</text>
</comment>
<comment type="subcellular location">
    <subcellularLocation>
        <location evidence="1">Cytoplasm</location>
    </subcellularLocation>
</comment>
<comment type="similarity">
    <text evidence="1">Belongs to the dethiobiotin synthetase family.</text>
</comment>
<keyword id="KW-0067">ATP-binding</keyword>
<keyword id="KW-0093">Biotin biosynthesis</keyword>
<keyword id="KW-0963">Cytoplasm</keyword>
<keyword id="KW-0436">Ligase</keyword>
<keyword id="KW-0460">Magnesium</keyword>
<keyword id="KW-0479">Metal-binding</keyword>
<keyword id="KW-0547">Nucleotide-binding</keyword>
<sequence length="242" mass="26282">MSGFFITATDTEVGKTVVAGALAGVFRELGYNIGVYKALQSGHVASNPEGDAARLKVLSGVPTKEDEICPYSIEEPLAPRLAMKRAGRAVTLKDIIHHYNERLKEFNSLFVEGAGGLAVPYTEDALVIDFAKELQLPLIVVARPTLGTVNHTVLTIAYAKAHGLTVAGVILSGCKECEMERVQENKVMIEELSGVPVLGLLPFFEGEFTKEEVLESAKEYIMISKLEEFIRNESTVAHTSSN</sequence>
<reference key="1">
    <citation type="submission" date="2008-10" db="EMBL/GenBank/DDBJ databases">
        <title>Genome sequence of Bacillus cereus AH820.</title>
        <authorList>
            <person name="Dodson R.J."/>
            <person name="Durkin A.S."/>
            <person name="Rosovitz M.J."/>
            <person name="Rasko D.A."/>
            <person name="Hoffmaster A."/>
            <person name="Ravel J."/>
            <person name="Sutton G."/>
        </authorList>
    </citation>
    <scope>NUCLEOTIDE SEQUENCE [LARGE SCALE GENOMIC DNA]</scope>
    <source>
        <strain>AH820</strain>
    </source>
</reference>
<proteinExistence type="inferred from homology"/>
<gene>
    <name evidence="1" type="primary">bioD</name>
    <name type="ordered locus">BCAH820_4142</name>
</gene>
<evidence type="ECO:0000255" key="1">
    <source>
        <dbReference type="HAMAP-Rule" id="MF_00336"/>
    </source>
</evidence>
<protein>
    <recommendedName>
        <fullName evidence="1">ATP-dependent dethiobiotin synthetase BioD</fullName>
        <ecNumber evidence="1">6.3.3.3</ecNumber>
    </recommendedName>
    <alternativeName>
        <fullName evidence="1">DTB synthetase</fullName>
        <shortName evidence="1">DTBS</shortName>
    </alternativeName>
    <alternativeName>
        <fullName evidence="1">Dethiobiotin synthase</fullName>
    </alternativeName>
</protein>
<organism>
    <name type="scientific">Bacillus cereus (strain AH820)</name>
    <dbReference type="NCBI Taxonomy" id="405535"/>
    <lineage>
        <taxon>Bacteria</taxon>
        <taxon>Bacillati</taxon>
        <taxon>Bacillota</taxon>
        <taxon>Bacilli</taxon>
        <taxon>Bacillales</taxon>
        <taxon>Bacillaceae</taxon>
        <taxon>Bacillus</taxon>
        <taxon>Bacillus cereus group</taxon>
    </lineage>
</organism>